<reference key="1">
    <citation type="journal article" date="1998" name="J. Biol. Chem.">
        <title>Cloning and characterization of the two enzymes responsible for trypanothione biosynthesis in Crithidia fasciculata.</title>
        <authorList>
            <person name="Tetaud E."/>
            <person name="Manai F."/>
            <person name="Barrett M.P."/>
            <person name="Nadeau K."/>
            <person name="Walsh C.T."/>
            <person name="Fairlamb A.H."/>
        </authorList>
    </citation>
    <scope>NUCLEOTIDE SEQUENCE [GENOMIC DNA]</scope>
    <scope>PARTIAL PROTEIN SEQUENCE</scope>
    <source>
        <strain>HS6</strain>
    </source>
</reference>
<reference key="2">
    <citation type="journal article" date="1992" name="Protein Sci.">
        <title>Purification of glutathionylspermidine and trypanothione synthetases from Crithidia fasciculata.</title>
        <authorList>
            <person name="Smith K."/>
            <person name="Nadeau K."/>
            <person name="Bradley M."/>
            <person name="Walsh C."/>
            <person name="Fairlamb A.H."/>
        </authorList>
    </citation>
    <scope>PROTEIN SEQUENCE OF 191-209; 351-358; 512-530; 532-538 AND 695-710</scope>
    <scope>CHARACTERIZATION</scope>
</reference>
<comment type="function">
    <text>Conjugates glutathione (gamma-Glu-Cys-Gly) and spermidine to form glutathionylspermidine in the biosynthesis trypanothione (N(1),N(8)-bis(glutathionyl)spermidine), which is involved in maintaining intracellular thiol redox and in defense against oxidants.</text>
</comment>
<comment type="catalytic activity">
    <reaction>
        <text>spermidine + glutathione + ATP = glutathionylspermidine + ADP + phosphate + H(+)</text>
        <dbReference type="Rhea" id="RHEA:21272"/>
        <dbReference type="ChEBI" id="CHEBI:15378"/>
        <dbReference type="ChEBI" id="CHEBI:30616"/>
        <dbReference type="ChEBI" id="CHEBI:43474"/>
        <dbReference type="ChEBI" id="CHEBI:57834"/>
        <dbReference type="ChEBI" id="CHEBI:57835"/>
        <dbReference type="ChEBI" id="CHEBI:57925"/>
        <dbReference type="ChEBI" id="CHEBI:456216"/>
        <dbReference type="EC" id="6.3.1.8"/>
    </reaction>
</comment>
<comment type="cofactor">
    <cofactor>
        <name>Mg(2+)</name>
        <dbReference type="ChEBI" id="CHEBI:18420"/>
    </cofactor>
</comment>
<comment type="PTM">
    <text>The N-terminus is blocked.</text>
</comment>
<comment type="similarity">
    <text evidence="3">In the C-terminal section; belongs to the glutathionylspermidine synthase preATP-grasp family.</text>
</comment>
<evidence type="ECO:0000250" key="1"/>
<evidence type="ECO:0000255" key="2">
    <source>
        <dbReference type="PROSITE-ProRule" id="PRU00048"/>
    </source>
</evidence>
<evidence type="ECO:0000305" key="3"/>
<accession>P90518</accession>
<name>GSP_CRIFA</name>
<dbReference type="EC" id="6.3.1.8"/>
<dbReference type="EMBL" id="U66520">
    <property type="protein sequence ID" value="AAC48361.2"/>
    <property type="molecule type" value="Genomic_DNA"/>
</dbReference>
<dbReference type="SMR" id="P90518"/>
<dbReference type="BindingDB" id="P90518"/>
<dbReference type="ChEMBL" id="CHEMBL3354"/>
<dbReference type="KEGG" id="ag:AAC48361"/>
<dbReference type="VEuPathDB" id="TriTrypDB:CFAC1_230008300"/>
<dbReference type="BRENDA" id="6.3.1.8">
    <property type="organism ID" value="1365"/>
</dbReference>
<dbReference type="SABIO-RK" id="P90518"/>
<dbReference type="GO" id="GO:0005524">
    <property type="term" value="F:ATP binding"/>
    <property type="evidence" value="ECO:0007669"/>
    <property type="project" value="UniProtKB-KW"/>
</dbReference>
<dbReference type="GO" id="GO:0008885">
    <property type="term" value="F:glutathionylspermidine synthase activity"/>
    <property type="evidence" value="ECO:0007669"/>
    <property type="project" value="UniProtKB-EC"/>
</dbReference>
<dbReference type="GO" id="GO:0046872">
    <property type="term" value="F:metal ion binding"/>
    <property type="evidence" value="ECO:0007669"/>
    <property type="project" value="UniProtKB-KW"/>
</dbReference>
<dbReference type="Gene3D" id="3.30.1490.330">
    <property type="match status" value="1"/>
</dbReference>
<dbReference type="Gene3D" id="3.90.1720.10">
    <property type="entry name" value="endopeptidase domain like (from Nostoc punctiforme)"/>
    <property type="match status" value="1"/>
</dbReference>
<dbReference type="InterPro" id="IPR007921">
    <property type="entry name" value="CHAP_dom"/>
</dbReference>
<dbReference type="InterPro" id="IPR051705">
    <property type="entry name" value="Gsp_Synthetase/Amidase"/>
</dbReference>
<dbReference type="InterPro" id="IPR005494">
    <property type="entry name" value="GSPS_pre-ATP-grasp-like_dom"/>
</dbReference>
<dbReference type="InterPro" id="IPR038765">
    <property type="entry name" value="Papain-like_cys_pep_sf"/>
</dbReference>
<dbReference type="InterPro" id="IPR016185">
    <property type="entry name" value="PreATP-grasp_dom_sf"/>
</dbReference>
<dbReference type="PANTHER" id="PTHR30094">
    <property type="entry name" value="BIFUNCTIONAL GLUTATHIONYLSPERMIDINE SYNTHETASE/AMIDASE-RELATED"/>
    <property type="match status" value="1"/>
</dbReference>
<dbReference type="PANTHER" id="PTHR30094:SF17">
    <property type="entry name" value="SYNTHETASE, PUTATIVE-RELATED"/>
    <property type="match status" value="1"/>
</dbReference>
<dbReference type="Pfam" id="PF05257">
    <property type="entry name" value="CHAP"/>
    <property type="match status" value="1"/>
</dbReference>
<dbReference type="Pfam" id="PF03738">
    <property type="entry name" value="GSP_synth"/>
    <property type="match status" value="1"/>
</dbReference>
<dbReference type="SUPFAM" id="SSF54001">
    <property type="entry name" value="Cysteine proteinases"/>
    <property type="match status" value="1"/>
</dbReference>
<dbReference type="SUPFAM" id="SSF56059">
    <property type="entry name" value="Glutathione synthetase ATP-binding domain-like"/>
    <property type="match status" value="1"/>
</dbReference>
<dbReference type="SUPFAM" id="SSF52440">
    <property type="entry name" value="PreATP-grasp domain"/>
    <property type="match status" value="1"/>
</dbReference>
<dbReference type="PROSITE" id="PS50911">
    <property type="entry name" value="CHAP"/>
    <property type="match status" value="1"/>
</dbReference>
<protein>
    <recommendedName>
        <fullName>Glutathionylspermidine synthase</fullName>
        <ecNumber>6.3.1.8</ecNumber>
    </recommendedName>
</protein>
<keyword id="KW-0067">ATP-binding</keyword>
<keyword id="KW-0903">Direct protein sequencing</keyword>
<keyword id="KW-0436">Ligase</keyword>
<keyword id="KW-0460">Magnesium</keyword>
<keyword id="KW-0479">Metal-binding</keyword>
<keyword id="KW-0547">Nucleotide-binding</keyword>
<gene>
    <name type="primary">GSP</name>
</gene>
<proteinExistence type="evidence at protein level"/>
<feature type="chain" id="PRO_0000070442" description="Glutathionylspermidine synthase">
    <location>
        <begin position="1"/>
        <end position="719"/>
    </location>
</feature>
<feature type="domain" description="Peptidase C51" evidence="2">
    <location>
        <begin position="54"/>
        <end position="200"/>
    </location>
</feature>
<feature type="binding site" evidence="1">
    <location>
        <begin position="350"/>
        <end position="352"/>
    </location>
    <ligand>
        <name>ATP</name>
        <dbReference type="ChEBI" id="CHEBI:30616"/>
    </ligand>
</feature>
<feature type="binding site" evidence="1">
    <location>
        <position position="350"/>
    </location>
    <ligand>
        <name>glutathione</name>
        <dbReference type="ChEBI" id="CHEBI:57925"/>
    </ligand>
</feature>
<feature type="binding site" evidence="1">
    <location>
        <position position="352"/>
    </location>
    <ligand>
        <name>Mg(2+)</name>
        <dbReference type="ChEBI" id="CHEBI:18420"/>
        <label>1</label>
    </ligand>
</feature>
<feature type="binding site" evidence="1">
    <location>
        <position position="364"/>
    </location>
    <ligand>
        <name>Mg(2+)</name>
        <dbReference type="ChEBI" id="CHEBI:18420"/>
        <label>1</label>
    </ligand>
</feature>
<feature type="binding site" evidence="1">
    <location>
        <position position="364"/>
    </location>
    <ligand>
        <name>Mg(2+)</name>
        <dbReference type="ChEBI" id="CHEBI:18420"/>
        <label>2</label>
    </ligand>
</feature>
<feature type="binding site" evidence="1">
    <location>
        <position position="366"/>
    </location>
    <ligand>
        <name>Mg(2+)</name>
        <dbReference type="ChEBI" id="CHEBI:18420"/>
        <label>2</label>
    </ligand>
</feature>
<feature type="binding site" evidence="1">
    <location>
        <position position="369"/>
    </location>
    <ligand>
        <name>glutathione</name>
        <dbReference type="ChEBI" id="CHEBI:57925"/>
    </ligand>
</feature>
<feature type="binding site" evidence="1">
    <location>
        <position position="432"/>
    </location>
    <ligand>
        <name>spermidine</name>
        <dbReference type="ChEBI" id="CHEBI:57834"/>
    </ligand>
</feature>
<feature type="binding site" evidence="1">
    <location>
        <position position="433"/>
    </location>
    <ligand>
        <name>glutathione</name>
        <dbReference type="ChEBI" id="CHEBI:57925"/>
    </ligand>
</feature>
<feature type="binding site" evidence="1">
    <location>
        <position position="501"/>
    </location>
    <ligand>
        <name>glutathione</name>
        <dbReference type="ChEBI" id="CHEBI:57925"/>
    </ligand>
</feature>
<feature type="binding site" evidence="1">
    <location>
        <position position="544"/>
    </location>
    <ligand>
        <name>ATP</name>
        <dbReference type="ChEBI" id="CHEBI:30616"/>
    </ligand>
</feature>
<feature type="binding site" evidence="1">
    <location>
        <position position="579"/>
    </location>
    <ligand>
        <name>ATP</name>
        <dbReference type="ChEBI" id="CHEBI:30616"/>
    </ligand>
</feature>
<feature type="binding site" evidence="1">
    <location>
        <position position="586"/>
    </location>
    <ligand>
        <name>ATP</name>
        <dbReference type="ChEBI" id="CHEBI:30616"/>
    </ligand>
</feature>
<feature type="binding site" evidence="1">
    <location>
        <position position="653"/>
    </location>
    <ligand>
        <name>ATP</name>
        <dbReference type="ChEBI" id="CHEBI:30616"/>
    </ligand>
</feature>
<feature type="binding site" evidence="1">
    <location>
        <begin position="689"/>
        <end position="691"/>
    </location>
    <ligand>
        <name>ATP</name>
        <dbReference type="ChEBI" id="CHEBI:30616"/>
    </ligand>
</feature>
<feature type="site" description="Transition state stabilizer" evidence="1">
    <location>
        <position position="350"/>
    </location>
</feature>
<sequence length="719" mass="80322">MSSLPHNHHYETHHRGTAEVPFDELIGVTPDGVPVISNGNEAHFSNLESITAACLPLSSFERKAPCKQPYRKMGVKWQCVEFVRRYLASRKAVWMTSLCTAEEVWREENLFVDVRDGRPVEVVRTPNKSTGPAPAVADIVVWGEGPETPFGHVAIVTEVCASCVRVAEQNQGFEKWPEDVPFSREIAMRTTESGEVELLDEDPLLGWVTVQAPFYNFDDGDLADSFRLVVGQGQILRQPFPKHVDVPWLNTGEECDTILKHSLVVDGNMGEGAHAEEGDVPGAFYFLDYDMFCRLGRAASSLHRIAMAATAKVLEDPESTHLLEHYFGVPPEIQPLLRRSWEMTPPMGGRFDFGYDGKNVVMLEYNCDSSGALLECCNTQEKMARFYGVSQGTSTGSFLGAKCVTYFQRLLTNEKVCPQHRLIHFMIDEDDEERYTARCMMGFAEQAGFRTKLCVKLVNFRYRDGPPSNAAPLATPCDHPTIVDGEDEEVLMVWKTWSWDTVLHQYHSQRSSSDAVNTPTLSDILLNNNIRVLEPLWKAVTGSKAILPFMHALAPDHEHMLAASFLPTREIISRHYISKPVNGRAGQNIMMYDPVTSPTELEGAPQQDICEALSQNASARSLLNGSPLPLSQSVDQTNECSPGKFFDSVLVYQQRLFLKKFDGKYFPIFCGWMVGDEFGGVVVREDTSKITKLSSMVVPARVVRDNVPLGVSYSDEGET</sequence>
<organism>
    <name type="scientific">Crithidia fasciculata</name>
    <dbReference type="NCBI Taxonomy" id="5656"/>
    <lineage>
        <taxon>Eukaryota</taxon>
        <taxon>Discoba</taxon>
        <taxon>Euglenozoa</taxon>
        <taxon>Kinetoplastea</taxon>
        <taxon>Metakinetoplastina</taxon>
        <taxon>Trypanosomatida</taxon>
        <taxon>Trypanosomatidae</taxon>
        <taxon>Leishmaniinae</taxon>
        <taxon>Crithidia</taxon>
    </lineage>
</organism>